<comment type="function">
    <text evidence="1">DNA ligase that seals nicks in double-stranded DNA during DNA replication, DNA recombination and DNA repair.</text>
</comment>
<comment type="catalytic activity">
    <reaction evidence="1">
        <text>ATP + (deoxyribonucleotide)n-3'-hydroxyl + 5'-phospho-(deoxyribonucleotide)m = (deoxyribonucleotide)n+m + AMP + diphosphate.</text>
        <dbReference type="EC" id="6.5.1.1"/>
    </reaction>
</comment>
<comment type="cofactor">
    <cofactor evidence="1">
        <name>Mg(2+)</name>
        <dbReference type="ChEBI" id="CHEBI:18420"/>
    </cofactor>
</comment>
<comment type="similarity">
    <text evidence="1">Belongs to the ATP-dependent DNA ligase family.</text>
</comment>
<feature type="chain" id="PRO_0000365250" description="DNA ligase 2">
    <location>
        <begin position="1"/>
        <end position="594"/>
    </location>
</feature>
<feature type="active site" description="N6-AMP-lysine intermediate" evidence="1">
    <location>
        <position position="252"/>
    </location>
</feature>
<feature type="binding site" evidence="1">
    <location>
        <position position="250"/>
    </location>
    <ligand>
        <name>ATP</name>
        <dbReference type="ChEBI" id="CHEBI:30616"/>
    </ligand>
</feature>
<feature type="binding site" evidence="1">
    <location>
        <position position="257"/>
    </location>
    <ligand>
        <name>ATP</name>
        <dbReference type="ChEBI" id="CHEBI:30616"/>
    </ligand>
</feature>
<feature type="binding site" evidence="1">
    <location>
        <position position="273"/>
    </location>
    <ligand>
        <name>ATP</name>
        <dbReference type="ChEBI" id="CHEBI:30616"/>
    </ligand>
</feature>
<feature type="binding site" evidence="1">
    <location>
        <position position="303"/>
    </location>
    <ligand>
        <name>ATP</name>
        <dbReference type="ChEBI" id="CHEBI:30616"/>
    </ligand>
</feature>
<feature type="binding site" evidence="1">
    <location>
        <position position="343"/>
    </location>
    <ligand>
        <name>ATP</name>
        <dbReference type="ChEBI" id="CHEBI:30616"/>
    </ligand>
</feature>
<feature type="binding site" evidence="1">
    <location>
        <position position="419"/>
    </location>
    <ligand>
        <name>ATP</name>
        <dbReference type="ChEBI" id="CHEBI:30616"/>
    </ligand>
</feature>
<feature type="binding site" evidence="1">
    <location>
        <position position="425"/>
    </location>
    <ligand>
        <name>ATP</name>
        <dbReference type="ChEBI" id="CHEBI:30616"/>
    </ligand>
</feature>
<proteinExistence type="inferred from homology"/>
<organism>
    <name type="scientific">Korarchaeum cryptofilum (strain OPF8)</name>
    <dbReference type="NCBI Taxonomy" id="374847"/>
    <lineage>
        <taxon>Archaea</taxon>
        <taxon>Thermoproteota</taxon>
        <taxon>Candidatus Korarchaeia</taxon>
        <taxon>Candidatus Korarchaeales</taxon>
        <taxon>Candidatus Korarchaeaceae</taxon>
        <taxon>Candidatus Korarchaeum</taxon>
    </lineage>
</organism>
<dbReference type="EC" id="6.5.1.1" evidence="1"/>
<dbReference type="EMBL" id="CP000968">
    <property type="protein sequence ID" value="ACB07131.1"/>
    <property type="molecule type" value="Genomic_DNA"/>
</dbReference>
<dbReference type="RefSeq" id="WP_012309028.1">
    <property type="nucleotide sequence ID" value="NC_010482.1"/>
</dbReference>
<dbReference type="SMR" id="B1L3V2"/>
<dbReference type="FunCoup" id="B1L3V2">
    <property type="interactions" value="115"/>
</dbReference>
<dbReference type="STRING" id="374847.Kcr_0375"/>
<dbReference type="EnsemblBacteria" id="ACB07131">
    <property type="protein sequence ID" value="ACB07131"/>
    <property type="gene ID" value="Kcr_0375"/>
</dbReference>
<dbReference type="GeneID" id="6093662"/>
<dbReference type="KEGG" id="kcr:Kcr_0375"/>
<dbReference type="eggNOG" id="arCOG01347">
    <property type="taxonomic scope" value="Archaea"/>
</dbReference>
<dbReference type="HOGENOM" id="CLU_005138_6_0_2"/>
<dbReference type="InParanoid" id="B1L3V2"/>
<dbReference type="OrthoDB" id="31274at2157"/>
<dbReference type="PhylomeDB" id="B1L3V2"/>
<dbReference type="Proteomes" id="UP000001686">
    <property type="component" value="Chromosome"/>
</dbReference>
<dbReference type="GO" id="GO:0005524">
    <property type="term" value="F:ATP binding"/>
    <property type="evidence" value="ECO:0007669"/>
    <property type="project" value="UniProtKB-UniRule"/>
</dbReference>
<dbReference type="GO" id="GO:0003677">
    <property type="term" value="F:DNA binding"/>
    <property type="evidence" value="ECO:0007669"/>
    <property type="project" value="InterPro"/>
</dbReference>
<dbReference type="GO" id="GO:0003910">
    <property type="term" value="F:DNA ligase (ATP) activity"/>
    <property type="evidence" value="ECO:0000318"/>
    <property type="project" value="GO_Central"/>
</dbReference>
<dbReference type="GO" id="GO:0046872">
    <property type="term" value="F:metal ion binding"/>
    <property type="evidence" value="ECO:0007669"/>
    <property type="project" value="UniProtKB-KW"/>
</dbReference>
<dbReference type="GO" id="GO:0051301">
    <property type="term" value="P:cell division"/>
    <property type="evidence" value="ECO:0007669"/>
    <property type="project" value="UniProtKB-KW"/>
</dbReference>
<dbReference type="GO" id="GO:0071897">
    <property type="term" value="P:DNA biosynthetic process"/>
    <property type="evidence" value="ECO:0007669"/>
    <property type="project" value="InterPro"/>
</dbReference>
<dbReference type="GO" id="GO:0006310">
    <property type="term" value="P:DNA recombination"/>
    <property type="evidence" value="ECO:0007669"/>
    <property type="project" value="UniProtKB-UniRule"/>
</dbReference>
<dbReference type="GO" id="GO:0006281">
    <property type="term" value="P:DNA repair"/>
    <property type="evidence" value="ECO:0007669"/>
    <property type="project" value="UniProtKB-UniRule"/>
</dbReference>
<dbReference type="GO" id="GO:0006273">
    <property type="term" value="P:lagging strand elongation"/>
    <property type="evidence" value="ECO:0000318"/>
    <property type="project" value="GO_Central"/>
</dbReference>
<dbReference type="CDD" id="cd07901">
    <property type="entry name" value="Adenylation_DNA_ligase_Arch_LigB"/>
    <property type="match status" value="1"/>
</dbReference>
<dbReference type="CDD" id="cd07969">
    <property type="entry name" value="OBF_DNA_ligase_I"/>
    <property type="match status" value="1"/>
</dbReference>
<dbReference type="FunFam" id="1.10.3260.10:FF:000007">
    <property type="entry name" value="DNA ligase"/>
    <property type="match status" value="1"/>
</dbReference>
<dbReference type="FunFam" id="2.40.50.140:FF:000062">
    <property type="entry name" value="DNA ligase"/>
    <property type="match status" value="1"/>
</dbReference>
<dbReference type="FunFam" id="3.30.470.30:FF:000012">
    <property type="entry name" value="Probable DNA ligase"/>
    <property type="match status" value="1"/>
</dbReference>
<dbReference type="Gene3D" id="1.10.3260.10">
    <property type="entry name" value="DNA ligase, ATP-dependent, N-terminal domain"/>
    <property type="match status" value="1"/>
</dbReference>
<dbReference type="Gene3D" id="3.30.470.30">
    <property type="entry name" value="DNA ligase/mRNA capping enzyme"/>
    <property type="match status" value="1"/>
</dbReference>
<dbReference type="Gene3D" id="2.40.50.140">
    <property type="entry name" value="Nucleic acid-binding proteins"/>
    <property type="match status" value="1"/>
</dbReference>
<dbReference type="HAMAP" id="MF_00407">
    <property type="entry name" value="DNA_ligase"/>
    <property type="match status" value="1"/>
</dbReference>
<dbReference type="InterPro" id="IPR050191">
    <property type="entry name" value="ATP-dep_DNA_ligase"/>
</dbReference>
<dbReference type="InterPro" id="IPR022865">
    <property type="entry name" value="DNA_ligae_ATP-dep_bac/arc"/>
</dbReference>
<dbReference type="InterPro" id="IPR000977">
    <property type="entry name" value="DNA_ligase_ATP-dep"/>
</dbReference>
<dbReference type="InterPro" id="IPR012309">
    <property type="entry name" value="DNA_ligase_ATP-dep_C"/>
</dbReference>
<dbReference type="InterPro" id="IPR012310">
    <property type="entry name" value="DNA_ligase_ATP-dep_cent"/>
</dbReference>
<dbReference type="InterPro" id="IPR016059">
    <property type="entry name" value="DNA_ligase_ATP-dep_CS"/>
</dbReference>
<dbReference type="InterPro" id="IPR012308">
    <property type="entry name" value="DNA_ligase_ATP-dep_N"/>
</dbReference>
<dbReference type="InterPro" id="IPR036599">
    <property type="entry name" value="DNA_ligase_N_sf"/>
</dbReference>
<dbReference type="InterPro" id="IPR012340">
    <property type="entry name" value="NA-bd_OB-fold"/>
</dbReference>
<dbReference type="NCBIfam" id="TIGR00574">
    <property type="entry name" value="dnl1"/>
    <property type="match status" value="1"/>
</dbReference>
<dbReference type="PANTHER" id="PTHR45674:SF4">
    <property type="entry name" value="DNA LIGASE 1"/>
    <property type="match status" value="1"/>
</dbReference>
<dbReference type="PANTHER" id="PTHR45674">
    <property type="entry name" value="DNA LIGASE 1/3 FAMILY MEMBER"/>
    <property type="match status" value="1"/>
</dbReference>
<dbReference type="Pfam" id="PF04679">
    <property type="entry name" value="DNA_ligase_A_C"/>
    <property type="match status" value="1"/>
</dbReference>
<dbReference type="Pfam" id="PF01068">
    <property type="entry name" value="DNA_ligase_A_M"/>
    <property type="match status" value="1"/>
</dbReference>
<dbReference type="Pfam" id="PF04675">
    <property type="entry name" value="DNA_ligase_A_N"/>
    <property type="match status" value="1"/>
</dbReference>
<dbReference type="SUPFAM" id="SSF117018">
    <property type="entry name" value="ATP-dependent DNA ligase DNA-binding domain"/>
    <property type="match status" value="1"/>
</dbReference>
<dbReference type="SUPFAM" id="SSF56091">
    <property type="entry name" value="DNA ligase/mRNA capping enzyme, catalytic domain"/>
    <property type="match status" value="1"/>
</dbReference>
<dbReference type="SUPFAM" id="SSF50249">
    <property type="entry name" value="Nucleic acid-binding proteins"/>
    <property type="match status" value="1"/>
</dbReference>
<dbReference type="PROSITE" id="PS00697">
    <property type="entry name" value="DNA_LIGASE_A1"/>
    <property type="match status" value="1"/>
</dbReference>
<dbReference type="PROSITE" id="PS00333">
    <property type="entry name" value="DNA_LIGASE_A2"/>
    <property type="match status" value="1"/>
</dbReference>
<dbReference type="PROSITE" id="PS50160">
    <property type="entry name" value="DNA_LIGASE_A3"/>
    <property type="match status" value="1"/>
</dbReference>
<name>DNLI2_KORCO</name>
<reference key="1">
    <citation type="journal article" date="2008" name="Proc. Natl. Acad. Sci. U.S.A.">
        <title>A korarchaeal genome reveals new insights into the evolution of the Archaea.</title>
        <authorList>
            <person name="Elkins J.G."/>
            <person name="Podar M."/>
            <person name="Graham D.E."/>
            <person name="Makarova K.S."/>
            <person name="Wolf Y."/>
            <person name="Randau L."/>
            <person name="Hedlund B.P."/>
            <person name="Brochier-Armanet C."/>
            <person name="Kunin V."/>
            <person name="Anderson I."/>
            <person name="Lapidus A."/>
            <person name="Goltsman E."/>
            <person name="Barry K."/>
            <person name="Koonin E.V."/>
            <person name="Hugenholtz P."/>
            <person name="Kyrpides N."/>
            <person name="Wanner G."/>
            <person name="Richardson P."/>
            <person name="Keller M."/>
            <person name="Stetter K.O."/>
        </authorList>
    </citation>
    <scope>NUCLEOTIDE SEQUENCE [LARGE SCALE GENOMIC DNA]</scope>
    <source>
        <strain>OPF8</strain>
    </source>
</reference>
<gene>
    <name evidence="1" type="primary">lig2</name>
    <name type="ordered locus">Kcr_0375</name>
</gene>
<accession>B1L3V2</accession>
<evidence type="ECO:0000255" key="1">
    <source>
        <dbReference type="HAMAP-Rule" id="MF_00407"/>
    </source>
</evidence>
<protein>
    <recommendedName>
        <fullName evidence="1">DNA ligase 2</fullName>
        <ecNumber evidence="1">6.5.1.1</ecNumber>
    </recommendedName>
    <alternativeName>
        <fullName evidence="1">Polydeoxyribonucleotide synthase [ATP] 2</fullName>
    </alternativeName>
</protein>
<keyword id="KW-0067">ATP-binding</keyword>
<keyword id="KW-0131">Cell cycle</keyword>
<keyword id="KW-0132">Cell division</keyword>
<keyword id="KW-0227">DNA damage</keyword>
<keyword id="KW-0233">DNA recombination</keyword>
<keyword id="KW-0234">DNA repair</keyword>
<keyword id="KW-0235">DNA replication</keyword>
<keyword id="KW-0436">Ligase</keyword>
<keyword id="KW-0460">Magnesium</keyword>
<keyword id="KW-0479">Metal-binding</keyword>
<keyword id="KW-0547">Nucleotide-binding</keyword>
<keyword id="KW-1185">Reference proteome</keyword>
<sequence length="594" mass="67657">MNFIDVAKIYEKIEATTGRLEMIDYLKNLFLSTPPEILDKIVYLTLGNIAASFEGIELGVGEKLFLRALSLATGIPQERLEEEYPKLGDIGKLAEWAVSKKAAQSFFTEDLTVERVFDTLSKVARATGEGAQDLKVRLIAGILSDAKPLEARYIARIVTEKLRLGVRDMTVLDALSEAFLKGRAYRDKLERKYNIYPDIGKIAKVVAEKGIKGLDEITITLGIPVRPMLAQRLRSAEEIMEKIGPRIFAEFKYDGERMQIHVWKDGKVKIFSRRLEDITEPYPDVREYVSKAVEGHEVVLDCETVAINPDTGEILPFQELMHRRRKYGVEEAMKTYPTVTYAFDLLYLDGRELLDEQLDDRRKILKEILKENEKARLVQYEEIDGNVEELERFFEHAVEMGTEGLVVKDPKSIYQAGVRGWSWIKLKRSYISKMIEPVDLVVVGAFWGKGKRAGTYGALLMAAYSPEEDVFKTVCKMGSGFTDEELARMPKLLEDYKIDHKHPSVISNIEADVYFVPVKVAQVLGDEITLSPTHTCGWNKVRKNAGLAIRFPRFMGWRDDKGPQDATTEEEIIEMYKEQLKVVEVEETKSEEEA</sequence>